<gene>
    <name evidence="1" type="primary">rps11</name>
    <name type="ordered locus">Pisl_0540</name>
</gene>
<proteinExistence type="inferred from homology"/>
<comment type="function">
    <text evidence="1">Located on the platform of the 30S subunit.</text>
</comment>
<comment type="subunit">
    <text evidence="1">Part of the 30S ribosomal subunit.</text>
</comment>
<comment type="similarity">
    <text evidence="1">Belongs to the universal ribosomal protein uS11 family.</text>
</comment>
<evidence type="ECO:0000255" key="1">
    <source>
        <dbReference type="HAMAP-Rule" id="MF_01310"/>
    </source>
</evidence>
<evidence type="ECO:0000305" key="2"/>
<dbReference type="EMBL" id="CP000504">
    <property type="protein sequence ID" value="ABL87718.1"/>
    <property type="molecule type" value="Genomic_DNA"/>
</dbReference>
<dbReference type="RefSeq" id="WP_011762295.1">
    <property type="nucleotide sequence ID" value="NC_008701.1"/>
</dbReference>
<dbReference type="SMR" id="A1RRY6"/>
<dbReference type="STRING" id="384616.Pisl_0540"/>
<dbReference type="GeneID" id="4616496"/>
<dbReference type="KEGG" id="pis:Pisl_0540"/>
<dbReference type="eggNOG" id="arCOG04240">
    <property type="taxonomic scope" value="Archaea"/>
</dbReference>
<dbReference type="HOGENOM" id="CLU_072439_6_1_2"/>
<dbReference type="OrthoDB" id="12054at2157"/>
<dbReference type="Proteomes" id="UP000002595">
    <property type="component" value="Chromosome"/>
</dbReference>
<dbReference type="GO" id="GO:1990904">
    <property type="term" value="C:ribonucleoprotein complex"/>
    <property type="evidence" value="ECO:0007669"/>
    <property type="project" value="UniProtKB-KW"/>
</dbReference>
<dbReference type="GO" id="GO:0005840">
    <property type="term" value="C:ribosome"/>
    <property type="evidence" value="ECO:0007669"/>
    <property type="project" value="UniProtKB-KW"/>
</dbReference>
<dbReference type="GO" id="GO:0019843">
    <property type="term" value="F:rRNA binding"/>
    <property type="evidence" value="ECO:0007669"/>
    <property type="project" value="UniProtKB-UniRule"/>
</dbReference>
<dbReference type="GO" id="GO:0003735">
    <property type="term" value="F:structural constituent of ribosome"/>
    <property type="evidence" value="ECO:0007669"/>
    <property type="project" value="InterPro"/>
</dbReference>
<dbReference type="GO" id="GO:0006412">
    <property type="term" value="P:translation"/>
    <property type="evidence" value="ECO:0007669"/>
    <property type="project" value="UniProtKB-UniRule"/>
</dbReference>
<dbReference type="FunFam" id="3.30.420.80:FF:000007">
    <property type="entry name" value="30S ribosomal protein S11"/>
    <property type="match status" value="1"/>
</dbReference>
<dbReference type="Gene3D" id="3.30.420.80">
    <property type="entry name" value="Ribosomal protein S11"/>
    <property type="match status" value="1"/>
</dbReference>
<dbReference type="HAMAP" id="MF_01310">
    <property type="entry name" value="Ribosomal_uS11"/>
    <property type="match status" value="1"/>
</dbReference>
<dbReference type="InterPro" id="IPR001971">
    <property type="entry name" value="Ribosomal_uS11"/>
</dbReference>
<dbReference type="InterPro" id="IPR019961">
    <property type="entry name" value="Ribosomal_uS11_archaeal"/>
</dbReference>
<dbReference type="InterPro" id="IPR018102">
    <property type="entry name" value="Ribosomal_uS11_CS"/>
</dbReference>
<dbReference type="InterPro" id="IPR036967">
    <property type="entry name" value="Ribosomal_uS11_sf"/>
</dbReference>
<dbReference type="NCBIfam" id="TIGR03628">
    <property type="entry name" value="arch_S11P"/>
    <property type="match status" value="1"/>
</dbReference>
<dbReference type="NCBIfam" id="NF007176">
    <property type="entry name" value="PRK09607.1"/>
    <property type="match status" value="1"/>
</dbReference>
<dbReference type="PANTHER" id="PTHR11759">
    <property type="entry name" value="40S RIBOSOMAL PROTEIN S14/30S RIBOSOMAL PROTEIN S11"/>
    <property type="match status" value="1"/>
</dbReference>
<dbReference type="Pfam" id="PF00411">
    <property type="entry name" value="Ribosomal_S11"/>
    <property type="match status" value="1"/>
</dbReference>
<dbReference type="PIRSF" id="PIRSF002131">
    <property type="entry name" value="Ribosomal_S11"/>
    <property type="match status" value="1"/>
</dbReference>
<dbReference type="SUPFAM" id="SSF53137">
    <property type="entry name" value="Translational machinery components"/>
    <property type="match status" value="1"/>
</dbReference>
<dbReference type="PROSITE" id="PS00054">
    <property type="entry name" value="RIBOSOMAL_S11"/>
    <property type="match status" value="1"/>
</dbReference>
<protein>
    <recommendedName>
        <fullName evidence="1">Small ribosomal subunit protein uS11</fullName>
    </recommendedName>
    <alternativeName>
        <fullName evidence="2">30S ribosomal protein S11</fullName>
    </alternativeName>
</protein>
<keyword id="KW-0687">Ribonucleoprotein</keyword>
<keyword id="KW-0689">Ribosomal protein</keyword>
<keyword id="KW-0694">RNA-binding</keyword>
<keyword id="KW-0699">rRNA-binding</keyword>
<sequence length="139" mass="14779">MSATEQPQQQQQKLRWGIAWIYSSSNNTIITITDLTGAETVARVSGGMVVRADKDKPSPWAAMQAAYKAAQLALARGINAVHIKVRGPGGYGMKVPGPGASAAIRALARSGLIIGRIEDVTPIPHDTIRPPSGRKGRRV</sequence>
<accession>A1RRY6</accession>
<name>RS11_PYRIL</name>
<feature type="chain" id="PRO_0000294904" description="Small ribosomal subunit protein uS11">
    <location>
        <begin position="1"/>
        <end position="139"/>
    </location>
</feature>
<reference key="1">
    <citation type="submission" date="2006-12" db="EMBL/GenBank/DDBJ databases">
        <title>Complete sequence of Pyrobaculum islandicum DSM 4184.</title>
        <authorList>
            <person name="Copeland A."/>
            <person name="Lucas S."/>
            <person name="Lapidus A."/>
            <person name="Barry K."/>
            <person name="Detter J.C."/>
            <person name="Glavina del Rio T."/>
            <person name="Dalin E."/>
            <person name="Tice H."/>
            <person name="Pitluck S."/>
            <person name="Meincke L."/>
            <person name="Brettin T."/>
            <person name="Bruce D."/>
            <person name="Han C."/>
            <person name="Tapia R."/>
            <person name="Gilna P."/>
            <person name="Schmutz J."/>
            <person name="Larimer F."/>
            <person name="Land M."/>
            <person name="Hauser L."/>
            <person name="Kyrpides N."/>
            <person name="Mikhailova N."/>
            <person name="Cozen A.E."/>
            <person name="Fitz-Gibbon S.T."/>
            <person name="House C.H."/>
            <person name="Saltikov C."/>
            <person name="Lowe T."/>
            <person name="Richardson P."/>
        </authorList>
    </citation>
    <scope>NUCLEOTIDE SEQUENCE [LARGE SCALE GENOMIC DNA]</scope>
    <source>
        <strain>DSM 4184 / JCM 9189 / GEO3</strain>
    </source>
</reference>
<organism>
    <name type="scientific">Pyrobaculum islandicum (strain DSM 4184 / JCM 9189 / GEO3)</name>
    <dbReference type="NCBI Taxonomy" id="384616"/>
    <lineage>
        <taxon>Archaea</taxon>
        <taxon>Thermoproteota</taxon>
        <taxon>Thermoprotei</taxon>
        <taxon>Thermoproteales</taxon>
        <taxon>Thermoproteaceae</taxon>
        <taxon>Pyrobaculum</taxon>
    </lineage>
</organism>